<evidence type="ECO:0000255" key="1">
    <source>
        <dbReference type="HAMAP-Rule" id="MF_01014"/>
    </source>
</evidence>
<protein>
    <recommendedName>
        <fullName evidence="1">1-(5-phosphoribosyl)-5-[(5-phosphoribosylamino)methylideneamino] imidazole-4-carboxamide isomerase</fullName>
        <ecNumber evidence="1">5.3.1.16</ecNumber>
    </recommendedName>
    <alternativeName>
        <fullName evidence="1">Phosphoribosylformimino-5-aminoimidazole carboxamide ribotide isomerase</fullName>
    </alternativeName>
</protein>
<name>HIS4_CAMJR</name>
<gene>
    <name evidence="1" type="primary">hisA</name>
    <name type="ordered locus">CJE1773</name>
</gene>
<sequence length="243" mass="26679">MTQIIPALDLIDGEVVRLVKGDYEQKKVYKYNPLKKFKEYEKAGAKELHLVDLTGAKDPSKRQFALIEKLAKEVSVNLQVGGGIRSKAEARALLDCGVKRVVIGSMAIKDATLCLEILKEFGSEAIVLALDTILKEDYVVAVNAWQEASDKKLMEVLDFYSNKGLKHILCTDISKDGTMQGVNARLYKLIHEIFPHICIQASGGVASLKDLENLKGICSGVIVGKALLDGVFSVEEGIRCLEN</sequence>
<keyword id="KW-0028">Amino-acid biosynthesis</keyword>
<keyword id="KW-0963">Cytoplasm</keyword>
<keyword id="KW-0368">Histidine biosynthesis</keyword>
<keyword id="KW-0413">Isomerase</keyword>
<dbReference type="EC" id="5.3.1.16" evidence="1"/>
<dbReference type="EMBL" id="CP000025">
    <property type="protein sequence ID" value="AAW36197.1"/>
    <property type="molecule type" value="Genomic_DNA"/>
</dbReference>
<dbReference type="RefSeq" id="WP_002867576.1">
    <property type="nucleotide sequence ID" value="NC_003912.7"/>
</dbReference>
<dbReference type="SMR" id="Q5HSJ0"/>
<dbReference type="KEGG" id="cjr:CJE1773"/>
<dbReference type="HOGENOM" id="CLU_048577_1_2_7"/>
<dbReference type="UniPathway" id="UPA00031">
    <property type="reaction ID" value="UER00009"/>
</dbReference>
<dbReference type="GO" id="GO:0005737">
    <property type="term" value="C:cytoplasm"/>
    <property type="evidence" value="ECO:0007669"/>
    <property type="project" value="UniProtKB-SubCell"/>
</dbReference>
<dbReference type="GO" id="GO:0003949">
    <property type="term" value="F:1-(5-phosphoribosyl)-5-[(5-phosphoribosylamino)methylideneamino]imidazole-4-carboxamide isomerase activity"/>
    <property type="evidence" value="ECO:0007669"/>
    <property type="project" value="UniProtKB-UniRule"/>
</dbReference>
<dbReference type="GO" id="GO:0000105">
    <property type="term" value="P:L-histidine biosynthetic process"/>
    <property type="evidence" value="ECO:0007669"/>
    <property type="project" value="UniProtKB-UniRule"/>
</dbReference>
<dbReference type="GO" id="GO:0000162">
    <property type="term" value="P:L-tryptophan biosynthetic process"/>
    <property type="evidence" value="ECO:0007669"/>
    <property type="project" value="TreeGrafter"/>
</dbReference>
<dbReference type="CDD" id="cd04732">
    <property type="entry name" value="HisA"/>
    <property type="match status" value="1"/>
</dbReference>
<dbReference type="FunFam" id="3.20.20.70:FF:000009">
    <property type="entry name" value="1-(5-phosphoribosyl)-5-[(5-phosphoribosylamino)methylideneamino] imidazole-4-carboxamide isomerase"/>
    <property type="match status" value="1"/>
</dbReference>
<dbReference type="Gene3D" id="3.20.20.70">
    <property type="entry name" value="Aldolase class I"/>
    <property type="match status" value="1"/>
</dbReference>
<dbReference type="HAMAP" id="MF_01014">
    <property type="entry name" value="HisA"/>
    <property type="match status" value="1"/>
</dbReference>
<dbReference type="InterPro" id="IPR013785">
    <property type="entry name" value="Aldolase_TIM"/>
</dbReference>
<dbReference type="InterPro" id="IPR006062">
    <property type="entry name" value="His_biosynth"/>
</dbReference>
<dbReference type="InterPro" id="IPR006063">
    <property type="entry name" value="HisA_bact_arch"/>
</dbReference>
<dbReference type="InterPro" id="IPR044524">
    <property type="entry name" value="Isoase_HisA-like"/>
</dbReference>
<dbReference type="InterPro" id="IPR023016">
    <property type="entry name" value="Isoase_HisA-like_bact"/>
</dbReference>
<dbReference type="InterPro" id="IPR011060">
    <property type="entry name" value="RibuloseP-bd_barrel"/>
</dbReference>
<dbReference type="NCBIfam" id="TIGR00007">
    <property type="entry name" value="1-(5-phosphoribosyl)-5-[(5-phosphoribosylamino)methylideneamino]imidazole-4-carboxamide isomerase"/>
    <property type="match status" value="1"/>
</dbReference>
<dbReference type="PANTHER" id="PTHR43090">
    <property type="entry name" value="1-(5-PHOSPHORIBOSYL)-5-[(5-PHOSPHORIBOSYLAMINO)METHYLIDENEAMINO] IMIDAZOLE-4-CARBOXAMIDE ISOMERASE"/>
    <property type="match status" value="1"/>
</dbReference>
<dbReference type="PANTHER" id="PTHR43090:SF2">
    <property type="entry name" value="1-(5-PHOSPHORIBOSYL)-5-[(5-PHOSPHORIBOSYLAMINO)METHYLIDENEAMINO] IMIDAZOLE-4-CARBOXAMIDE ISOMERASE"/>
    <property type="match status" value="1"/>
</dbReference>
<dbReference type="Pfam" id="PF00977">
    <property type="entry name" value="His_biosynth"/>
    <property type="match status" value="1"/>
</dbReference>
<dbReference type="SUPFAM" id="SSF51366">
    <property type="entry name" value="Ribulose-phoshate binding barrel"/>
    <property type="match status" value="1"/>
</dbReference>
<feature type="chain" id="PRO_0000229048" description="1-(5-phosphoribosyl)-5-[(5-phosphoribosylamino)methylideneamino] imidazole-4-carboxamide isomerase">
    <location>
        <begin position="1"/>
        <end position="243"/>
    </location>
</feature>
<feature type="active site" description="Proton acceptor" evidence="1">
    <location>
        <position position="9"/>
    </location>
</feature>
<feature type="active site" description="Proton donor" evidence="1">
    <location>
        <position position="131"/>
    </location>
</feature>
<proteinExistence type="inferred from homology"/>
<organism>
    <name type="scientific">Campylobacter jejuni (strain RM1221)</name>
    <dbReference type="NCBI Taxonomy" id="195099"/>
    <lineage>
        <taxon>Bacteria</taxon>
        <taxon>Pseudomonadati</taxon>
        <taxon>Campylobacterota</taxon>
        <taxon>Epsilonproteobacteria</taxon>
        <taxon>Campylobacterales</taxon>
        <taxon>Campylobacteraceae</taxon>
        <taxon>Campylobacter</taxon>
    </lineage>
</organism>
<comment type="catalytic activity">
    <reaction evidence="1">
        <text>1-(5-phospho-beta-D-ribosyl)-5-[(5-phospho-beta-D-ribosylamino)methylideneamino]imidazole-4-carboxamide = 5-[(5-phospho-1-deoxy-D-ribulos-1-ylimino)methylamino]-1-(5-phospho-beta-D-ribosyl)imidazole-4-carboxamide</text>
        <dbReference type="Rhea" id="RHEA:15469"/>
        <dbReference type="ChEBI" id="CHEBI:58435"/>
        <dbReference type="ChEBI" id="CHEBI:58525"/>
        <dbReference type="EC" id="5.3.1.16"/>
    </reaction>
</comment>
<comment type="pathway">
    <text evidence="1">Amino-acid biosynthesis; L-histidine biosynthesis; L-histidine from 5-phospho-alpha-D-ribose 1-diphosphate: step 4/9.</text>
</comment>
<comment type="subcellular location">
    <subcellularLocation>
        <location evidence="1">Cytoplasm</location>
    </subcellularLocation>
</comment>
<comment type="similarity">
    <text evidence="1">Belongs to the HisA/HisF family.</text>
</comment>
<reference key="1">
    <citation type="journal article" date="2005" name="PLoS Biol.">
        <title>Major structural differences and novel potential virulence mechanisms from the genomes of multiple Campylobacter species.</title>
        <authorList>
            <person name="Fouts D.E."/>
            <person name="Mongodin E.F."/>
            <person name="Mandrell R.E."/>
            <person name="Miller W.G."/>
            <person name="Rasko D.A."/>
            <person name="Ravel J."/>
            <person name="Brinkac L.M."/>
            <person name="DeBoy R.T."/>
            <person name="Parker C.T."/>
            <person name="Daugherty S.C."/>
            <person name="Dodson R.J."/>
            <person name="Durkin A.S."/>
            <person name="Madupu R."/>
            <person name="Sullivan S.A."/>
            <person name="Shetty J.U."/>
            <person name="Ayodeji M.A."/>
            <person name="Shvartsbeyn A."/>
            <person name="Schatz M.C."/>
            <person name="Badger J.H."/>
            <person name="Fraser C.M."/>
            <person name="Nelson K.E."/>
        </authorList>
    </citation>
    <scope>NUCLEOTIDE SEQUENCE [LARGE SCALE GENOMIC DNA]</scope>
    <source>
        <strain>RM1221</strain>
    </source>
</reference>
<accession>Q5HSJ0</accession>